<proteinExistence type="inferred from homology"/>
<keyword id="KW-0012">Acyltransferase</keyword>
<keyword id="KW-0963">Cytoplasm</keyword>
<keyword id="KW-0408">Iron</keyword>
<keyword id="KW-0479">Metal-binding</keyword>
<keyword id="KW-0808">Transferase</keyword>
<keyword id="KW-0819">tRNA processing</keyword>
<reference key="1">
    <citation type="journal article" date="2007" name="Proc. Natl. Acad. Sci. U.S.A.">
        <title>Deep-sea vent epsilon-proteobacterial genomes provide insights into emergence of pathogens.</title>
        <authorList>
            <person name="Nakagawa S."/>
            <person name="Takaki Y."/>
            <person name="Shimamura S."/>
            <person name="Reysenbach A.-L."/>
            <person name="Takai K."/>
            <person name="Horikoshi K."/>
        </authorList>
    </citation>
    <scope>NUCLEOTIDE SEQUENCE [LARGE SCALE GENOMIC DNA]</scope>
    <source>
        <strain>NBC37-1</strain>
    </source>
</reference>
<sequence>MILSIESSCDDSSIAVTETSTKKILYHKKISQEAEHSCYGGVVPELASRLHAVALPKILEETKPWFDKLKAVAVTNQPGLGVTLLEGIAMAKTVAVLQNIPLIPVHHLKGHIYSLFIEKKTLFPLLVLLISGGHTQIIRVKDFEHMEILATSMDDSVGESFDKCAKMMHLGYPGGPLIEALALKGDENRFDLPVPLRNSPLIAFSLSGLKNAVRLTVEKLGGAEKMTEQDEADLSASFQKAVKLHLLQKSKKIFAKEPIRDFAIVGGASANQYLRGAYADLCREFRKTMHVAPLQYCSDNAAMIGRYAIDAYEREQFIDPNEIDIVSTKKQQAGMLL</sequence>
<accession>A6Q6J3</accession>
<feature type="chain" id="PRO_1000024460" description="tRNA N6-adenosine threonylcarbamoyltransferase">
    <location>
        <begin position="1"/>
        <end position="337"/>
    </location>
</feature>
<feature type="binding site" evidence="1">
    <location>
        <position position="107"/>
    </location>
    <ligand>
        <name>Fe cation</name>
        <dbReference type="ChEBI" id="CHEBI:24875"/>
    </ligand>
</feature>
<feature type="binding site" evidence="1">
    <location>
        <position position="111"/>
    </location>
    <ligand>
        <name>Fe cation</name>
        <dbReference type="ChEBI" id="CHEBI:24875"/>
    </ligand>
</feature>
<feature type="binding site" evidence="1">
    <location>
        <begin position="129"/>
        <end position="133"/>
    </location>
    <ligand>
        <name>substrate</name>
    </ligand>
</feature>
<feature type="binding site" evidence="1">
    <location>
        <position position="162"/>
    </location>
    <ligand>
        <name>substrate</name>
    </ligand>
</feature>
<feature type="binding site" evidence="1">
    <location>
        <position position="175"/>
    </location>
    <ligand>
        <name>substrate</name>
    </ligand>
</feature>
<feature type="binding site" evidence="1">
    <location>
        <position position="271"/>
    </location>
    <ligand>
        <name>substrate</name>
    </ligand>
</feature>
<feature type="binding site" evidence="1">
    <location>
        <position position="299"/>
    </location>
    <ligand>
        <name>Fe cation</name>
        <dbReference type="ChEBI" id="CHEBI:24875"/>
    </ligand>
</feature>
<dbReference type="EC" id="2.3.1.234" evidence="1"/>
<dbReference type="EMBL" id="AP009179">
    <property type="protein sequence ID" value="BAF71102.1"/>
    <property type="molecule type" value="Genomic_DNA"/>
</dbReference>
<dbReference type="RefSeq" id="WP_011979835.1">
    <property type="nucleotide sequence ID" value="NC_009663.1"/>
</dbReference>
<dbReference type="SMR" id="A6Q6J3"/>
<dbReference type="STRING" id="387093.SUN_0142"/>
<dbReference type="KEGG" id="sun:SUN_0142"/>
<dbReference type="eggNOG" id="COG0533">
    <property type="taxonomic scope" value="Bacteria"/>
</dbReference>
<dbReference type="HOGENOM" id="CLU_023208_0_3_7"/>
<dbReference type="OrthoDB" id="9806197at2"/>
<dbReference type="Proteomes" id="UP000006378">
    <property type="component" value="Chromosome"/>
</dbReference>
<dbReference type="GO" id="GO:0005737">
    <property type="term" value="C:cytoplasm"/>
    <property type="evidence" value="ECO:0007669"/>
    <property type="project" value="UniProtKB-SubCell"/>
</dbReference>
<dbReference type="GO" id="GO:0005506">
    <property type="term" value="F:iron ion binding"/>
    <property type="evidence" value="ECO:0007669"/>
    <property type="project" value="UniProtKB-UniRule"/>
</dbReference>
<dbReference type="GO" id="GO:0061711">
    <property type="term" value="F:N(6)-L-threonylcarbamoyladenine synthase activity"/>
    <property type="evidence" value="ECO:0007669"/>
    <property type="project" value="UniProtKB-EC"/>
</dbReference>
<dbReference type="GO" id="GO:0002949">
    <property type="term" value="P:tRNA threonylcarbamoyladenosine modification"/>
    <property type="evidence" value="ECO:0007669"/>
    <property type="project" value="UniProtKB-UniRule"/>
</dbReference>
<dbReference type="Gene3D" id="3.30.420.40">
    <property type="match status" value="2"/>
</dbReference>
<dbReference type="HAMAP" id="MF_01445">
    <property type="entry name" value="TsaD"/>
    <property type="match status" value="1"/>
</dbReference>
<dbReference type="InterPro" id="IPR043129">
    <property type="entry name" value="ATPase_NBD"/>
</dbReference>
<dbReference type="InterPro" id="IPR000905">
    <property type="entry name" value="Gcp-like_dom"/>
</dbReference>
<dbReference type="InterPro" id="IPR017861">
    <property type="entry name" value="KAE1/TsaD"/>
</dbReference>
<dbReference type="InterPro" id="IPR022450">
    <property type="entry name" value="TsaD"/>
</dbReference>
<dbReference type="NCBIfam" id="TIGR00329">
    <property type="entry name" value="gcp_kae1"/>
    <property type="match status" value="1"/>
</dbReference>
<dbReference type="NCBIfam" id="TIGR03723">
    <property type="entry name" value="T6A_TsaD_YgjD"/>
    <property type="match status" value="1"/>
</dbReference>
<dbReference type="PANTHER" id="PTHR11735">
    <property type="entry name" value="TRNA N6-ADENOSINE THREONYLCARBAMOYLTRANSFERASE"/>
    <property type="match status" value="1"/>
</dbReference>
<dbReference type="PANTHER" id="PTHR11735:SF6">
    <property type="entry name" value="TRNA N6-ADENOSINE THREONYLCARBAMOYLTRANSFERASE, MITOCHONDRIAL"/>
    <property type="match status" value="1"/>
</dbReference>
<dbReference type="Pfam" id="PF00814">
    <property type="entry name" value="TsaD"/>
    <property type="match status" value="1"/>
</dbReference>
<dbReference type="PRINTS" id="PR00789">
    <property type="entry name" value="OSIALOPTASE"/>
</dbReference>
<dbReference type="SUPFAM" id="SSF53067">
    <property type="entry name" value="Actin-like ATPase domain"/>
    <property type="match status" value="2"/>
</dbReference>
<comment type="function">
    <text evidence="1">Required for the formation of a threonylcarbamoyl group on adenosine at position 37 (t(6)A37) in tRNAs that read codons beginning with adenine. Is involved in the transfer of the threonylcarbamoyl moiety of threonylcarbamoyl-AMP (TC-AMP) to the N6 group of A37, together with TsaE and TsaB. TsaD likely plays a direct catalytic role in this reaction.</text>
</comment>
<comment type="catalytic activity">
    <reaction evidence="1">
        <text>L-threonylcarbamoyladenylate + adenosine(37) in tRNA = N(6)-L-threonylcarbamoyladenosine(37) in tRNA + AMP + H(+)</text>
        <dbReference type="Rhea" id="RHEA:37059"/>
        <dbReference type="Rhea" id="RHEA-COMP:10162"/>
        <dbReference type="Rhea" id="RHEA-COMP:10163"/>
        <dbReference type="ChEBI" id="CHEBI:15378"/>
        <dbReference type="ChEBI" id="CHEBI:73682"/>
        <dbReference type="ChEBI" id="CHEBI:74411"/>
        <dbReference type="ChEBI" id="CHEBI:74418"/>
        <dbReference type="ChEBI" id="CHEBI:456215"/>
        <dbReference type="EC" id="2.3.1.234"/>
    </reaction>
</comment>
<comment type="cofactor">
    <cofactor evidence="1">
        <name>Fe(2+)</name>
        <dbReference type="ChEBI" id="CHEBI:29033"/>
    </cofactor>
    <text evidence="1">Binds 1 Fe(2+) ion per subunit.</text>
</comment>
<comment type="subcellular location">
    <subcellularLocation>
        <location evidence="1">Cytoplasm</location>
    </subcellularLocation>
</comment>
<comment type="similarity">
    <text evidence="1">Belongs to the KAE1 / TsaD family.</text>
</comment>
<gene>
    <name evidence="1" type="primary">tsaD</name>
    <name type="synonym">gcp</name>
    <name type="ordered locus">SUN_0142</name>
</gene>
<protein>
    <recommendedName>
        <fullName evidence="1">tRNA N6-adenosine threonylcarbamoyltransferase</fullName>
        <ecNumber evidence="1">2.3.1.234</ecNumber>
    </recommendedName>
    <alternativeName>
        <fullName evidence="1">N6-L-threonylcarbamoyladenine synthase</fullName>
        <shortName evidence="1">t(6)A synthase</shortName>
    </alternativeName>
    <alternativeName>
        <fullName evidence="1">t(6)A37 threonylcarbamoyladenosine biosynthesis protein TsaD</fullName>
    </alternativeName>
    <alternativeName>
        <fullName evidence="1">tRNA threonylcarbamoyladenosine biosynthesis protein TsaD</fullName>
    </alternativeName>
</protein>
<organism>
    <name type="scientific">Sulfurovum sp. (strain NBC37-1)</name>
    <dbReference type="NCBI Taxonomy" id="387093"/>
    <lineage>
        <taxon>Bacteria</taxon>
        <taxon>Pseudomonadati</taxon>
        <taxon>Campylobacterota</taxon>
        <taxon>Epsilonproteobacteria</taxon>
        <taxon>Campylobacterales</taxon>
        <taxon>Sulfurovaceae</taxon>
        <taxon>Sulfurovum</taxon>
    </lineage>
</organism>
<name>TSAD_SULNB</name>
<evidence type="ECO:0000255" key="1">
    <source>
        <dbReference type="HAMAP-Rule" id="MF_01445"/>
    </source>
</evidence>